<name>AROL_ECOSM</name>
<gene>
    <name evidence="1" type="primary">aroL</name>
    <name type="ordered locus">EcSMS35_0418</name>
</gene>
<reference key="1">
    <citation type="journal article" date="2008" name="J. Bacteriol.">
        <title>Insights into the environmental resistance gene pool from the genome sequence of the multidrug-resistant environmental isolate Escherichia coli SMS-3-5.</title>
        <authorList>
            <person name="Fricke W.F."/>
            <person name="Wright M.S."/>
            <person name="Lindell A.H."/>
            <person name="Harkins D.M."/>
            <person name="Baker-Austin C."/>
            <person name="Ravel J."/>
            <person name="Stepanauskas R."/>
        </authorList>
    </citation>
    <scope>NUCLEOTIDE SEQUENCE [LARGE SCALE GENOMIC DNA]</scope>
    <source>
        <strain>SMS-3-5 / SECEC</strain>
    </source>
</reference>
<comment type="function">
    <text evidence="1">Catalyzes the specific phosphorylation of the 3-hydroxyl group of shikimic acid using ATP as a cosubstrate.</text>
</comment>
<comment type="catalytic activity">
    <reaction evidence="1">
        <text>shikimate + ATP = 3-phosphoshikimate + ADP + H(+)</text>
        <dbReference type="Rhea" id="RHEA:13121"/>
        <dbReference type="ChEBI" id="CHEBI:15378"/>
        <dbReference type="ChEBI" id="CHEBI:30616"/>
        <dbReference type="ChEBI" id="CHEBI:36208"/>
        <dbReference type="ChEBI" id="CHEBI:145989"/>
        <dbReference type="ChEBI" id="CHEBI:456216"/>
        <dbReference type="EC" id="2.7.1.71"/>
    </reaction>
</comment>
<comment type="cofactor">
    <cofactor evidence="1">
        <name>Mg(2+)</name>
        <dbReference type="ChEBI" id="CHEBI:18420"/>
    </cofactor>
    <text evidence="1">Binds 1 Mg(2+) ion per subunit.</text>
</comment>
<comment type="pathway">
    <text evidence="1">Metabolic intermediate biosynthesis; chorismate biosynthesis; chorismate from D-erythrose 4-phosphate and phosphoenolpyruvate: step 5/7.</text>
</comment>
<comment type="subunit">
    <text evidence="1">Monomer.</text>
</comment>
<comment type="subcellular location">
    <subcellularLocation>
        <location evidence="1">Cytoplasm</location>
    </subcellularLocation>
</comment>
<comment type="domain">
    <text evidence="1">The LID domain closes over the active site upon ATP binding.</text>
</comment>
<comment type="similarity">
    <text evidence="1">Belongs to the shikimate kinase family. AroL subfamily.</text>
</comment>
<organism>
    <name type="scientific">Escherichia coli (strain SMS-3-5 / SECEC)</name>
    <dbReference type="NCBI Taxonomy" id="439855"/>
    <lineage>
        <taxon>Bacteria</taxon>
        <taxon>Pseudomonadati</taxon>
        <taxon>Pseudomonadota</taxon>
        <taxon>Gammaproteobacteria</taxon>
        <taxon>Enterobacterales</taxon>
        <taxon>Enterobacteriaceae</taxon>
        <taxon>Escherichia</taxon>
    </lineage>
</organism>
<sequence length="174" mass="19151">MTQPLFLIGPRGCGKTTVGMALADSLNRRFVDTDQWLQSQLNMTVAEIVEREEWAGFRARETAALEAVTAPSTVIATGGGIILTEFNRHFMQNNGIVVYLCAPVSVLVNRLQAAPEEDLRPTLTGKPLSEEVQEVLEERDALYREVAHIIIDATNEPSQVISEIRSALAQTINC</sequence>
<evidence type="ECO:0000255" key="1">
    <source>
        <dbReference type="HAMAP-Rule" id="MF_01269"/>
    </source>
</evidence>
<dbReference type="EC" id="2.7.1.71" evidence="1"/>
<dbReference type="EMBL" id="CP000970">
    <property type="protein sequence ID" value="ACB19695.1"/>
    <property type="molecule type" value="Genomic_DNA"/>
</dbReference>
<dbReference type="RefSeq" id="WP_000193393.1">
    <property type="nucleotide sequence ID" value="NC_010498.1"/>
</dbReference>
<dbReference type="SMR" id="B1LIS2"/>
<dbReference type="GeneID" id="93777073"/>
<dbReference type="KEGG" id="ecm:EcSMS35_0418"/>
<dbReference type="HOGENOM" id="CLU_057607_4_3_6"/>
<dbReference type="UniPathway" id="UPA00053">
    <property type="reaction ID" value="UER00088"/>
</dbReference>
<dbReference type="Proteomes" id="UP000007011">
    <property type="component" value="Chromosome"/>
</dbReference>
<dbReference type="GO" id="GO:0005829">
    <property type="term" value="C:cytosol"/>
    <property type="evidence" value="ECO:0007669"/>
    <property type="project" value="TreeGrafter"/>
</dbReference>
<dbReference type="GO" id="GO:0005524">
    <property type="term" value="F:ATP binding"/>
    <property type="evidence" value="ECO:0007669"/>
    <property type="project" value="UniProtKB-UniRule"/>
</dbReference>
<dbReference type="GO" id="GO:0000287">
    <property type="term" value="F:magnesium ion binding"/>
    <property type="evidence" value="ECO:0007669"/>
    <property type="project" value="UniProtKB-UniRule"/>
</dbReference>
<dbReference type="GO" id="GO:0004765">
    <property type="term" value="F:shikimate kinase activity"/>
    <property type="evidence" value="ECO:0007669"/>
    <property type="project" value="UniProtKB-UniRule"/>
</dbReference>
<dbReference type="GO" id="GO:0008652">
    <property type="term" value="P:amino acid biosynthetic process"/>
    <property type="evidence" value="ECO:0007669"/>
    <property type="project" value="UniProtKB-KW"/>
</dbReference>
<dbReference type="GO" id="GO:0009073">
    <property type="term" value="P:aromatic amino acid family biosynthetic process"/>
    <property type="evidence" value="ECO:0007669"/>
    <property type="project" value="UniProtKB-KW"/>
</dbReference>
<dbReference type="GO" id="GO:0009423">
    <property type="term" value="P:chorismate biosynthetic process"/>
    <property type="evidence" value="ECO:0007669"/>
    <property type="project" value="UniProtKB-UniRule"/>
</dbReference>
<dbReference type="CDD" id="cd00464">
    <property type="entry name" value="SK"/>
    <property type="match status" value="1"/>
</dbReference>
<dbReference type="FunFam" id="3.40.50.300:FF:000408">
    <property type="entry name" value="Shikimate kinase 2"/>
    <property type="match status" value="1"/>
</dbReference>
<dbReference type="Gene3D" id="3.40.50.300">
    <property type="entry name" value="P-loop containing nucleotide triphosphate hydrolases"/>
    <property type="match status" value="1"/>
</dbReference>
<dbReference type="HAMAP" id="MF_00109">
    <property type="entry name" value="Shikimate_kinase"/>
    <property type="match status" value="1"/>
</dbReference>
<dbReference type="HAMAP" id="MF_01269">
    <property type="entry name" value="Shikimate_kinase_2"/>
    <property type="match status" value="1"/>
</dbReference>
<dbReference type="InterPro" id="IPR027417">
    <property type="entry name" value="P-loop_NTPase"/>
</dbReference>
<dbReference type="InterPro" id="IPR031322">
    <property type="entry name" value="Shikimate/glucono_kinase"/>
</dbReference>
<dbReference type="InterPro" id="IPR000623">
    <property type="entry name" value="Shikimate_kinase/TSH1"/>
</dbReference>
<dbReference type="InterPro" id="IPR027544">
    <property type="entry name" value="Shikimate_kinase_2"/>
</dbReference>
<dbReference type="InterPro" id="IPR023000">
    <property type="entry name" value="Shikimate_kinase_CS"/>
</dbReference>
<dbReference type="NCBIfam" id="NF002988">
    <property type="entry name" value="PRK03731.1"/>
    <property type="match status" value="1"/>
</dbReference>
<dbReference type="PANTHER" id="PTHR21087">
    <property type="entry name" value="SHIKIMATE KINASE"/>
    <property type="match status" value="1"/>
</dbReference>
<dbReference type="PANTHER" id="PTHR21087:SF21">
    <property type="entry name" value="SHIKIMATE KINASE 2"/>
    <property type="match status" value="1"/>
</dbReference>
<dbReference type="Pfam" id="PF01202">
    <property type="entry name" value="SKI"/>
    <property type="match status" value="1"/>
</dbReference>
<dbReference type="PRINTS" id="PR01100">
    <property type="entry name" value="SHIKIMTKNASE"/>
</dbReference>
<dbReference type="SUPFAM" id="SSF52540">
    <property type="entry name" value="P-loop containing nucleoside triphosphate hydrolases"/>
    <property type="match status" value="1"/>
</dbReference>
<dbReference type="PROSITE" id="PS01128">
    <property type="entry name" value="SHIKIMATE_KINASE"/>
    <property type="match status" value="1"/>
</dbReference>
<feature type="chain" id="PRO_1000140134" description="Shikimate kinase 2">
    <location>
        <begin position="1"/>
        <end position="174"/>
    </location>
</feature>
<feature type="region of interest" description="LID domain">
    <location>
        <begin position="112"/>
        <end position="126"/>
    </location>
</feature>
<feature type="binding site" evidence="1">
    <location>
        <begin position="12"/>
        <end position="17"/>
    </location>
    <ligand>
        <name>ATP</name>
        <dbReference type="ChEBI" id="CHEBI:30616"/>
    </ligand>
</feature>
<feature type="binding site" evidence="1">
    <location>
        <position position="16"/>
    </location>
    <ligand>
        <name>Mg(2+)</name>
        <dbReference type="ChEBI" id="CHEBI:18420"/>
    </ligand>
</feature>
<feature type="binding site" evidence="1">
    <location>
        <position position="32"/>
    </location>
    <ligand>
        <name>Mg(2+)</name>
        <dbReference type="ChEBI" id="CHEBI:18420"/>
    </ligand>
</feature>
<feature type="binding site" evidence="1">
    <location>
        <position position="34"/>
    </location>
    <ligand>
        <name>substrate</name>
    </ligand>
</feature>
<feature type="binding site" evidence="1">
    <location>
        <position position="58"/>
    </location>
    <ligand>
        <name>substrate</name>
    </ligand>
</feature>
<feature type="binding site" evidence="1">
    <location>
        <position position="79"/>
    </location>
    <ligand>
        <name>substrate</name>
    </ligand>
</feature>
<feature type="binding site" evidence="1">
    <location>
        <position position="120"/>
    </location>
    <ligand>
        <name>ATP</name>
        <dbReference type="ChEBI" id="CHEBI:30616"/>
    </ligand>
</feature>
<feature type="binding site" evidence="1">
    <location>
        <position position="139"/>
    </location>
    <ligand>
        <name>substrate</name>
    </ligand>
</feature>
<keyword id="KW-0028">Amino-acid biosynthesis</keyword>
<keyword id="KW-0057">Aromatic amino acid biosynthesis</keyword>
<keyword id="KW-0067">ATP-binding</keyword>
<keyword id="KW-0963">Cytoplasm</keyword>
<keyword id="KW-0418">Kinase</keyword>
<keyword id="KW-0460">Magnesium</keyword>
<keyword id="KW-0479">Metal-binding</keyword>
<keyword id="KW-0547">Nucleotide-binding</keyword>
<keyword id="KW-0808">Transferase</keyword>
<proteinExistence type="inferred from homology"/>
<accession>B1LIS2</accession>
<protein>
    <recommendedName>
        <fullName evidence="1">Shikimate kinase 2</fullName>
        <shortName evidence="1">SK 2</shortName>
        <ecNumber evidence="1">2.7.1.71</ecNumber>
    </recommendedName>
</protein>